<reference key="1">
    <citation type="submission" date="2009-04" db="UniProtKB">
        <title>Hyaluronidase enzyme in venom of spider P.keyserlinigi (wandering).</title>
        <authorList>
            <person name="Richardson M."/>
            <person name="Borges M.H."/>
            <person name="Souza I.A."/>
            <person name="Cordeiro M.N."/>
        </authorList>
    </citation>
    <scope>PROTEIN SEQUENCE</scope>
    <scope>CATALYTIC ACTIVITY</scope>
    <scope>SUBCELLULAR LOCATION</scope>
    <scope>TISSUE SPECIFICITY</scope>
    <source>
        <tissue evidence="4">Venom</tissue>
    </source>
</reference>
<name>HYAL_PHOKE</name>
<proteinExistence type="evidence at protein level"/>
<dbReference type="EC" id="3.2.1.35"/>
<dbReference type="ArachnoServer" id="AS001206">
    <property type="toxin name" value="Hyaluronidase-Pk1a (fragment)"/>
</dbReference>
<dbReference type="GO" id="GO:0005576">
    <property type="term" value="C:extracellular region"/>
    <property type="evidence" value="ECO:0007669"/>
    <property type="project" value="UniProtKB-SubCell"/>
</dbReference>
<dbReference type="GO" id="GO:0004415">
    <property type="term" value="F:hyalurononglucosaminidase activity"/>
    <property type="evidence" value="ECO:0007669"/>
    <property type="project" value="UniProtKB-EC"/>
</dbReference>
<comment type="function">
    <text evidence="1">Hydrolyzes high molecular weight hyaluronic acid to produce small oligosaccharides.</text>
</comment>
<comment type="catalytic activity">
    <reaction evidence="4">
        <text>Random hydrolysis of (1-&gt;4)-linkages between N-acetyl-beta-D-glucosamine and D-glucuronate residues in hyaluronate.</text>
        <dbReference type="EC" id="3.2.1.35"/>
    </reaction>
</comment>
<comment type="subcellular location">
    <subcellularLocation>
        <location evidence="4">Secreted</location>
    </subcellularLocation>
</comment>
<comment type="tissue specificity">
    <text evidence="4">Expressed by the venom gland.</text>
</comment>
<comment type="miscellaneous">
    <text evidence="4">On the 2D-gel the MW of this protein is: 37 kDa.</text>
</comment>
<comment type="similarity">
    <text evidence="3">Belongs to the glycosyl hydrolase 56 family.</text>
</comment>
<organism>
    <name type="scientific">Phoneutria keyserlingi</name>
    <name type="common">Brazilian wandering spider</name>
    <name type="synonym">Ctenus keyserlingii</name>
    <dbReference type="NCBI Taxonomy" id="272754"/>
    <lineage>
        <taxon>Eukaryota</taxon>
        <taxon>Metazoa</taxon>
        <taxon>Ecdysozoa</taxon>
        <taxon>Arthropoda</taxon>
        <taxon>Chelicerata</taxon>
        <taxon>Arachnida</taxon>
        <taxon>Araneae</taxon>
        <taxon>Araneomorphae</taxon>
        <taxon>Entelegynae</taxon>
        <taxon>Lycosoidea</taxon>
        <taxon>Ctenidae</taxon>
        <taxon>Phoneutria</taxon>
    </lineage>
</organism>
<feature type="chain" id="PRO_0000376024" description="Hyaluronidase-Pk1a">
    <location>
        <begin position="1"/>
        <end position="32" status="greater than"/>
    </location>
</feature>
<feature type="glycosylation site" description="N-linked (GlcNAc...) asparagine" evidence="3">
    <location>
        <position position="23"/>
    </location>
</feature>
<feature type="disulfide bond" evidence="2">
    <location>
        <begin position="12"/>
        <end status="unknown"/>
    </location>
</feature>
<feature type="non-terminal residue" evidence="5">
    <location>
        <position position="32"/>
    </location>
</feature>
<accession>P86274</accession>
<keyword id="KW-0903">Direct protein sequencing</keyword>
<keyword id="KW-1015">Disulfide bond</keyword>
<keyword id="KW-0325">Glycoprotein</keyword>
<keyword id="KW-0326">Glycosidase</keyword>
<keyword id="KW-0378">Hydrolase</keyword>
<keyword id="KW-0964">Secreted</keyword>
<sequence>FEVYWNVPTLQCRAVYKMIFKLNRTYGIQXNA</sequence>
<evidence type="ECO:0000250" key="1"/>
<evidence type="ECO:0000250" key="2">
    <source>
        <dbReference type="UniProtKB" id="Q08169"/>
    </source>
</evidence>
<evidence type="ECO:0000255" key="3"/>
<evidence type="ECO:0000269" key="4">
    <source ref="1"/>
</evidence>
<evidence type="ECO:0000303" key="5">
    <source ref="1"/>
</evidence>
<protein>
    <recommendedName>
        <fullName evidence="2">Hyaluronidase-Pk1a</fullName>
        <shortName evidence="5">Hya</shortName>
        <ecNumber>3.2.1.35</ecNumber>
    </recommendedName>
    <alternativeName>
        <fullName evidence="2">Hyaluronoglucosaminidase</fullName>
    </alternativeName>
</protein>